<proteinExistence type="uncertain"/>
<sequence length="256" mass="29211">MYSSVSKRLVSVHILVVVALQLLFIPNVLSLNQTNAYLHHKCVNDQGTYNSGTPYEKNLNSLIRTISTLNLNFGFVHSSNGDAPNSVFIKLQCRGDSYFSKCRSCLATANSEIRRRCPKNKEKIIWYDNCVLEISSIDTFNKIDYQNNFFMYNAKDVSGDIELFNKNTRDLLHELKEKANIKSKKDFMYAAGEKGLGEKKLYAMVQCTKDLTPNNCNVCLNWIMAKLPKCCKGKQGGRVLSTSCNFRYELYPFLMI</sequence>
<reference key="1">
    <citation type="journal article" date="2000" name="DNA Res.">
        <title>Structural analysis of Arabidopsis thaliana chromosome 3. I. Sequence features of the regions of 4,504,864 bp covered by sixty P1 and TAC clones.</title>
        <authorList>
            <person name="Sato S."/>
            <person name="Nakamura Y."/>
            <person name="Kaneko T."/>
            <person name="Katoh T."/>
            <person name="Asamizu E."/>
            <person name="Tabata S."/>
        </authorList>
    </citation>
    <scope>NUCLEOTIDE SEQUENCE [LARGE SCALE GENOMIC DNA]</scope>
    <source>
        <strain>cv. Columbia</strain>
    </source>
</reference>
<reference key="2">
    <citation type="journal article" date="2017" name="Plant J.">
        <title>Araport11: a complete reannotation of the Arabidopsis thaliana reference genome.</title>
        <authorList>
            <person name="Cheng C.Y."/>
            <person name="Krishnakumar V."/>
            <person name="Chan A.P."/>
            <person name="Thibaud-Nissen F."/>
            <person name="Schobel S."/>
            <person name="Town C.D."/>
        </authorList>
    </citation>
    <scope>GENOME REANNOTATION</scope>
    <source>
        <strain>cv. Columbia</strain>
    </source>
</reference>
<reference key="3">
    <citation type="journal article" date="2001" name="Plant Physiol.">
        <title>A superfamily of proteins with novel cysteine-rich repeats.</title>
        <authorList>
            <person name="Chen Z."/>
        </authorList>
    </citation>
    <scope>GENE FAMILY ORGANIZATION</scope>
    <scope>NOMENCLATURE</scope>
</reference>
<name>CRR21_ARATH</name>
<organism>
    <name type="scientific">Arabidopsis thaliana</name>
    <name type="common">Mouse-ear cress</name>
    <dbReference type="NCBI Taxonomy" id="3702"/>
    <lineage>
        <taxon>Eukaryota</taxon>
        <taxon>Viridiplantae</taxon>
        <taxon>Streptophyta</taxon>
        <taxon>Embryophyta</taxon>
        <taxon>Tracheophyta</taxon>
        <taxon>Spermatophyta</taxon>
        <taxon>Magnoliopsida</taxon>
        <taxon>eudicotyledons</taxon>
        <taxon>Gunneridae</taxon>
        <taxon>Pentapetalae</taxon>
        <taxon>rosids</taxon>
        <taxon>malvids</taxon>
        <taxon>Brassicales</taxon>
        <taxon>Brassicaceae</taxon>
        <taxon>Camelineae</taxon>
        <taxon>Arabidopsis</taxon>
    </lineage>
</organism>
<gene>
    <name type="primary">CRRSP21</name>
    <name type="ordered locus">At3g21937</name>
    <name type="ORF">MZN24.7</name>
</gene>
<evidence type="ECO:0000255" key="1"/>
<evidence type="ECO:0000255" key="2">
    <source>
        <dbReference type="PROSITE-ProRule" id="PRU00806"/>
    </source>
</evidence>
<evidence type="ECO:0000305" key="3"/>
<comment type="subcellular location">
    <subcellularLocation>
        <location evidence="3">Secreted</location>
    </subcellularLocation>
</comment>
<comment type="similarity">
    <text evidence="3">Belongs to the cysteine-rich repeat secretory protein family.</text>
</comment>
<comment type="caution">
    <text evidence="3">Could be the product of a pseudogene.</text>
</comment>
<comment type="sequence caution" evidence="3">
    <conflict type="erroneous gene model prediction">
        <sequence resource="EMBL-CDS" id="BAB01372"/>
    </conflict>
</comment>
<comment type="sequence caution" evidence="3">
    <conflict type="frameshift">
        <sequence resource="EMBL-CDS" id="BAB01372"/>
    </conflict>
</comment>
<keyword id="KW-1185">Reference proteome</keyword>
<keyword id="KW-0677">Repeat</keyword>
<keyword id="KW-0964">Secreted</keyword>
<keyword id="KW-0732">Signal</keyword>
<protein>
    <recommendedName>
        <fullName>Putative cysteine-rich repeat secretory protein 21</fullName>
    </recommendedName>
</protein>
<dbReference type="EMBL" id="AB028622">
    <property type="protein sequence ID" value="BAB01372.1"/>
    <property type="status" value="ALT_SEQ"/>
    <property type="molecule type" value="Genomic_DNA"/>
</dbReference>
<dbReference type="EMBL" id="CP002686">
    <property type="status" value="NOT_ANNOTATED_CDS"/>
    <property type="molecule type" value="Genomic_DNA"/>
</dbReference>
<dbReference type="SMR" id="Q9LRL8"/>
<dbReference type="Araport" id="AT3G21937"/>
<dbReference type="TAIR" id="AT3G21937"/>
<dbReference type="InParanoid" id="Q9LRL8"/>
<dbReference type="Proteomes" id="UP000006548">
    <property type="component" value="Chromosome 3"/>
</dbReference>
<dbReference type="ExpressionAtlas" id="Q9LRL8">
    <property type="expression patterns" value="baseline and differential"/>
</dbReference>
<dbReference type="GO" id="GO:0005576">
    <property type="term" value="C:extracellular region"/>
    <property type="evidence" value="ECO:0007669"/>
    <property type="project" value="UniProtKB-SubCell"/>
</dbReference>
<dbReference type="CDD" id="cd23509">
    <property type="entry name" value="Gnk2-like"/>
    <property type="match status" value="2"/>
</dbReference>
<dbReference type="FunFam" id="3.30.430.20:FF:000002">
    <property type="entry name" value="Cysteine-rich receptor-like protein kinase 10"/>
    <property type="match status" value="1"/>
</dbReference>
<dbReference type="Gene3D" id="3.30.430.20">
    <property type="entry name" value="Gnk2 domain, C-X8-C-X2-C motif"/>
    <property type="match status" value="2"/>
</dbReference>
<dbReference type="InterPro" id="IPR050581">
    <property type="entry name" value="CRR_secretory_protein"/>
</dbReference>
<dbReference type="InterPro" id="IPR002902">
    <property type="entry name" value="GNK2"/>
</dbReference>
<dbReference type="InterPro" id="IPR038408">
    <property type="entry name" value="GNK2_sf"/>
</dbReference>
<dbReference type="PANTHER" id="PTHR32411:SF54">
    <property type="entry name" value="CYSTEINE-RICH REPEAT SECRETORY PROTEIN 29-RELATED"/>
    <property type="match status" value="1"/>
</dbReference>
<dbReference type="PANTHER" id="PTHR32411">
    <property type="entry name" value="CYSTEINE-RICH REPEAT SECRETORY PROTEIN 38-RELATED"/>
    <property type="match status" value="1"/>
</dbReference>
<dbReference type="Pfam" id="PF01657">
    <property type="entry name" value="Stress-antifung"/>
    <property type="match status" value="2"/>
</dbReference>
<dbReference type="PROSITE" id="PS51473">
    <property type="entry name" value="GNK2"/>
    <property type="match status" value="2"/>
</dbReference>
<feature type="signal peptide" evidence="1">
    <location>
        <begin position="1"/>
        <end position="30"/>
    </location>
</feature>
<feature type="chain" id="PRO_0000296149" description="Putative cysteine-rich repeat secretory protein 21">
    <location>
        <begin position="31"/>
        <end position="256"/>
    </location>
</feature>
<feature type="domain" description="Gnk2-homologous 1" evidence="2">
    <location>
        <begin position="37"/>
        <end position="139"/>
    </location>
</feature>
<feature type="domain" description="Gnk2-homologous 2" evidence="2">
    <location>
        <begin position="145"/>
        <end position="253"/>
    </location>
</feature>
<accession>Q9LRL8</accession>